<reference key="1">
    <citation type="journal article" date="2000" name="Nucleic Acids Res.">
        <title>Complete genome sequence of the alkaliphilic bacterium Bacillus halodurans and genomic sequence comparison with Bacillus subtilis.</title>
        <authorList>
            <person name="Takami H."/>
            <person name="Nakasone K."/>
            <person name="Takaki Y."/>
            <person name="Maeno G."/>
            <person name="Sasaki R."/>
            <person name="Masui N."/>
            <person name="Fuji F."/>
            <person name="Hirama C."/>
            <person name="Nakamura Y."/>
            <person name="Ogasawara N."/>
            <person name="Kuhara S."/>
            <person name="Horikoshi K."/>
        </authorList>
    </citation>
    <scope>NUCLEOTIDE SEQUENCE [LARGE SCALE GENOMIC DNA]</scope>
    <source>
        <strain>ATCC BAA-125 / DSM 18197 / FERM 7344 / JCM 9153 / C-125</strain>
    </source>
</reference>
<protein>
    <recommendedName>
        <fullName evidence="1">3'-5' exoribonuclease YhaM</fullName>
        <ecNumber evidence="1">3.1.-.-</ecNumber>
    </recommendedName>
</protein>
<name>YHAM_HALH5</name>
<dbReference type="EC" id="3.1.-.-" evidence="1"/>
<dbReference type="EMBL" id="BA000004">
    <property type="protein sequence ID" value="BAB04894.1"/>
    <property type="molecule type" value="Genomic_DNA"/>
</dbReference>
<dbReference type="PIR" id="G83796">
    <property type="entry name" value="G83796"/>
</dbReference>
<dbReference type="RefSeq" id="WP_010897345.1">
    <property type="nucleotide sequence ID" value="NC_002570.2"/>
</dbReference>
<dbReference type="SMR" id="Q9KDN6"/>
<dbReference type="STRING" id="272558.gene:10727069"/>
<dbReference type="KEGG" id="bha:BH1175"/>
<dbReference type="eggNOG" id="COG3481">
    <property type="taxonomic scope" value="Bacteria"/>
</dbReference>
<dbReference type="HOGENOM" id="CLU_056349_2_0_9"/>
<dbReference type="OrthoDB" id="9778453at2"/>
<dbReference type="Proteomes" id="UP000001258">
    <property type="component" value="Chromosome"/>
</dbReference>
<dbReference type="GO" id="GO:0000175">
    <property type="term" value="F:3'-5'-RNA exonuclease activity"/>
    <property type="evidence" value="ECO:0007669"/>
    <property type="project" value="UniProtKB-UniRule"/>
</dbReference>
<dbReference type="GO" id="GO:0003677">
    <property type="term" value="F:DNA binding"/>
    <property type="evidence" value="ECO:0007669"/>
    <property type="project" value="UniProtKB-KW"/>
</dbReference>
<dbReference type="GO" id="GO:0031125">
    <property type="term" value="P:rRNA 3'-end processing"/>
    <property type="evidence" value="ECO:0007669"/>
    <property type="project" value="TreeGrafter"/>
</dbReference>
<dbReference type="CDD" id="cd00077">
    <property type="entry name" value="HDc"/>
    <property type="match status" value="1"/>
</dbReference>
<dbReference type="CDD" id="cd04492">
    <property type="entry name" value="YhaM_OBF_like"/>
    <property type="match status" value="1"/>
</dbReference>
<dbReference type="FunFam" id="1.10.3210.10:FF:000008">
    <property type="entry name" value="3'-5' exoribonuclease YhaM"/>
    <property type="match status" value="1"/>
</dbReference>
<dbReference type="Gene3D" id="1.10.3210.10">
    <property type="entry name" value="Hypothetical protein af1432"/>
    <property type="match status" value="1"/>
</dbReference>
<dbReference type="Gene3D" id="2.40.50.140">
    <property type="entry name" value="Nucleic acid-binding proteins"/>
    <property type="match status" value="1"/>
</dbReference>
<dbReference type="HAMAP" id="MF_01427">
    <property type="entry name" value="3_5_Exoribonuc_YhaM"/>
    <property type="match status" value="1"/>
</dbReference>
<dbReference type="InterPro" id="IPR020873">
    <property type="entry name" value="3'-5'_exoribonuclease_YhaM"/>
</dbReference>
<dbReference type="InterPro" id="IPR003607">
    <property type="entry name" value="HD/PDEase_dom"/>
</dbReference>
<dbReference type="InterPro" id="IPR006674">
    <property type="entry name" value="HD_domain"/>
</dbReference>
<dbReference type="InterPro" id="IPR012340">
    <property type="entry name" value="NA-bd_OB-fold"/>
</dbReference>
<dbReference type="InterPro" id="IPR004365">
    <property type="entry name" value="NA-bd_OB_tRNA"/>
</dbReference>
<dbReference type="InterPro" id="IPR050798">
    <property type="entry name" value="YhaM_exoribonuc/phosphodiest"/>
</dbReference>
<dbReference type="NCBIfam" id="NF010007">
    <property type="entry name" value="PRK13480.1"/>
    <property type="match status" value="1"/>
</dbReference>
<dbReference type="PANTHER" id="PTHR37294">
    <property type="entry name" value="3'-5' EXORIBONUCLEASE YHAM"/>
    <property type="match status" value="1"/>
</dbReference>
<dbReference type="PANTHER" id="PTHR37294:SF1">
    <property type="entry name" value="3'-5' EXORIBONUCLEASE YHAM"/>
    <property type="match status" value="1"/>
</dbReference>
<dbReference type="Pfam" id="PF01966">
    <property type="entry name" value="HD"/>
    <property type="match status" value="1"/>
</dbReference>
<dbReference type="Pfam" id="PF01336">
    <property type="entry name" value="tRNA_anti-codon"/>
    <property type="match status" value="1"/>
</dbReference>
<dbReference type="SMART" id="SM00471">
    <property type="entry name" value="HDc"/>
    <property type="match status" value="1"/>
</dbReference>
<dbReference type="SUPFAM" id="SSF109604">
    <property type="entry name" value="HD-domain/PDEase-like"/>
    <property type="match status" value="1"/>
</dbReference>
<dbReference type="SUPFAM" id="SSF50249">
    <property type="entry name" value="Nucleic acid-binding proteins"/>
    <property type="match status" value="1"/>
</dbReference>
<dbReference type="PROSITE" id="PS51831">
    <property type="entry name" value="HD"/>
    <property type="match status" value="1"/>
</dbReference>
<evidence type="ECO:0000255" key="1">
    <source>
        <dbReference type="HAMAP-Rule" id="MF_01427"/>
    </source>
</evidence>
<evidence type="ECO:0000255" key="2">
    <source>
        <dbReference type="PROSITE-ProRule" id="PRU01175"/>
    </source>
</evidence>
<organism>
    <name type="scientific">Halalkalibacterium halodurans (strain ATCC BAA-125 / DSM 18197 / FERM 7344 / JCM 9153 / C-125)</name>
    <name type="common">Bacillus halodurans</name>
    <dbReference type="NCBI Taxonomy" id="272558"/>
    <lineage>
        <taxon>Bacteria</taxon>
        <taxon>Bacillati</taxon>
        <taxon>Bacillota</taxon>
        <taxon>Bacilli</taxon>
        <taxon>Bacillales</taxon>
        <taxon>Bacillaceae</taxon>
        <taxon>Halalkalibacterium (ex Joshi et al. 2022)</taxon>
    </lineage>
</organism>
<feature type="chain" id="PRO_0000109857" description="3'-5' exoribonuclease YhaM">
    <location>
        <begin position="1"/>
        <end position="320"/>
    </location>
</feature>
<feature type="domain" description="HD" evidence="2">
    <location>
        <begin position="163"/>
        <end position="279"/>
    </location>
</feature>
<feature type="DNA-binding region" description="OB">
    <location>
        <begin position="18"/>
        <end position="90"/>
    </location>
</feature>
<keyword id="KW-0238">DNA-binding</keyword>
<keyword id="KW-0269">Exonuclease</keyword>
<keyword id="KW-0378">Hydrolase</keyword>
<keyword id="KW-0540">Nuclease</keyword>
<keyword id="KW-1185">Reference proteome</keyword>
<gene>
    <name evidence="1" type="primary">yhaM</name>
    <name type="ordered locus">BH1175</name>
</gene>
<comment type="function">
    <text evidence="1">Shows a 3'-5' exoribonuclease activity.</text>
</comment>
<comment type="similarity">
    <text evidence="1">Belongs to the YhaM family.</text>
</comment>
<proteinExistence type="inferred from homology"/>
<accession>Q9KDN6</accession>
<sequence length="320" mass="35793">MSRGILYYQVGEALESYFLIKSATKAVASNGKPFLTLILSDHTGEIEAKLWGCSPEDEATFVSGAIVHISGQLSEYRGRQQLKIGSIRPTTAMDQVKVSDFVRSAPLSPDDMLEQITQYIFEMKNPKIQRMTRHLLKKHQTAFLEYPAATTNHHEFVSGLAYHVVCMLNVAKSLAALYPTLDTDLLYAGIILHDLGKVKELSGPIDTTYTIEGKLLGHISILVNEIGETANELGIEGEEVIILQHLVLAHHSKGEWGSPKPPLIREAEILHMIDNIDAKMNMMDRALERVQPGEFSERIKAMDNRSFYKPNFHEPPLDLS</sequence>